<dbReference type="EMBL" id="BX284602">
    <property type="protein sequence ID" value="CCD71041.1"/>
    <property type="molecule type" value="Genomic_DNA"/>
</dbReference>
<dbReference type="PIR" id="T16332">
    <property type="entry name" value="T16332"/>
</dbReference>
<dbReference type="RefSeq" id="NP_495381.1">
    <property type="nucleotide sequence ID" value="NM_062980.5"/>
</dbReference>
<dbReference type="SMR" id="Q20291"/>
<dbReference type="FunCoup" id="Q20291">
    <property type="interactions" value="158"/>
</dbReference>
<dbReference type="STRING" id="6239.F41G3.4.1"/>
<dbReference type="PaxDb" id="6239-F41G3.4"/>
<dbReference type="EnsemblMetazoa" id="F41G3.4.1">
    <property type="protein sequence ID" value="F41G3.4.1"/>
    <property type="gene ID" value="WBGene00001424"/>
</dbReference>
<dbReference type="GeneID" id="185630"/>
<dbReference type="KEGG" id="cel:CELE_F41G3.4"/>
<dbReference type="UCSC" id="F41G3.4">
    <property type="organism name" value="c. elegans"/>
</dbReference>
<dbReference type="AGR" id="WB:WBGene00001424"/>
<dbReference type="CTD" id="185630"/>
<dbReference type="WormBase" id="F41G3.4">
    <property type="protein sequence ID" value="CE01288"/>
    <property type="gene ID" value="WBGene00001424"/>
    <property type="gene designation" value="fis-1"/>
</dbReference>
<dbReference type="eggNOG" id="KOG3364">
    <property type="taxonomic scope" value="Eukaryota"/>
</dbReference>
<dbReference type="GeneTree" id="ENSGT00390000000592"/>
<dbReference type="HOGENOM" id="CLU_104368_1_0_1"/>
<dbReference type="InParanoid" id="Q20291"/>
<dbReference type="OMA" id="ADEFPLC"/>
<dbReference type="OrthoDB" id="421154at2759"/>
<dbReference type="PhylomeDB" id="Q20291"/>
<dbReference type="PRO" id="PR:Q20291"/>
<dbReference type="Proteomes" id="UP000001940">
    <property type="component" value="Chromosome II"/>
</dbReference>
<dbReference type="Bgee" id="WBGene00001424">
    <property type="expression patterns" value="Expressed in material anatomical entity and 3 other cell types or tissues"/>
</dbReference>
<dbReference type="GO" id="GO:0005741">
    <property type="term" value="C:mitochondrial outer membrane"/>
    <property type="evidence" value="ECO:0000314"/>
    <property type="project" value="WormBase"/>
</dbReference>
<dbReference type="GO" id="GO:0005778">
    <property type="term" value="C:peroxisomal membrane"/>
    <property type="evidence" value="ECO:0000318"/>
    <property type="project" value="GO_Central"/>
</dbReference>
<dbReference type="GO" id="GO:0008289">
    <property type="term" value="F:lipid binding"/>
    <property type="evidence" value="ECO:0000318"/>
    <property type="project" value="GO_Central"/>
</dbReference>
<dbReference type="GO" id="GO:0060090">
    <property type="term" value="F:molecular adaptor activity"/>
    <property type="evidence" value="ECO:0000318"/>
    <property type="project" value="GO_Central"/>
</dbReference>
<dbReference type="GO" id="GO:0006915">
    <property type="term" value="P:apoptotic process"/>
    <property type="evidence" value="ECO:0007669"/>
    <property type="project" value="UniProtKB-KW"/>
</dbReference>
<dbReference type="GO" id="GO:0006974">
    <property type="term" value="P:DNA damage response"/>
    <property type="evidence" value="ECO:0007669"/>
    <property type="project" value="UniProtKB-KW"/>
</dbReference>
<dbReference type="GO" id="GO:0000266">
    <property type="term" value="P:mitochondrial fission"/>
    <property type="evidence" value="ECO:0000318"/>
    <property type="project" value="GO_Central"/>
</dbReference>
<dbReference type="GO" id="GO:0016559">
    <property type="term" value="P:peroxisome fission"/>
    <property type="evidence" value="ECO:0000318"/>
    <property type="project" value="GO_Central"/>
</dbReference>
<dbReference type="CDD" id="cd12212">
    <property type="entry name" value="Fis1"/>
    <property type="match status" value="1"/>
</dbReference>
<dbReference type="Gene3D" id="1.25.40.10">
    <property type="entry name" value="Tetratricopeptide repeat domain"/>
    <property type="match status" value="1"/>
</dbReference>
<dbReference type="InterPro" id="IPR016543">
    <property type="entry name" value="Fis1"/>
</dbReference>
<dbReference type="InterPro" id="IPR033745">
    <property type="entry name" value="Fis1_cytosol"/>
</dbReference>
<dbReference type="InterPro" id="IPR028061">
    <property type="entry name" value="Fis1_TPR_C"/>
</dbReference>
<dbReference type="InterPro" id="IPR028058">
    <property type="entry name" value="Fis1_TPR_N"/>
</dbReference>
<dbReference type="InterPro" id="IPR011990">
    <property type="entry name" value="TPR-like_helical_dom_sf"/>
</dbReference>
<dbReference type="PANTHER" id="PTHR13247:SF1">
    <property type="entry name" value="FIS1-RELATED PROTEIN FIS-1"/>
    <property type="match status" value="1"/>
</dbReference>
<dbReference type="PANTHER" id="PTHR13247">
    <property type="entry name" value="TETRATRICOPEPTIDE REPEAT PROTEIN 11 TPR REPEAT PROTEIN 11"/>
    <property type="match status" value="1"/>
</dbReference>
<dbReference type="Pfam" id="PF14853">
    <property type="entry name" value="Fis1_TPR_C"/>
    <property type="match status" value="1"/>
</dbReference>
<dbReference type="Pfam" id="PF14852">
    <property type="entry name" value="Fis1_TPR_N"/>
    <property type="match status" value="1"/>
</dbReference>
<dbReference type="PIRSF" id="PIRSF008835">
    <property type="entry name" value="TPR_repeat_11_Fis1"/>
    <property type="match status" value="1"/>
</dbReference>
<dbReference type="SUPFAM" id="SSF48452">
    <property type="entry name" value="TPR-like"/>
    <property type="match status" value="1"/>
</dbReference>
<keyword id="KW-0053">Apoptosis</keyword>
<keyword id="KW-0227">DNA damage</keyword>
<keyword id="KW-0472">Membrane</keyword>
<keyword id="KW-0496">Mitochondrion</keyword>
<keyword id="KW-1000">Mitochondrion outer membrane</keyword>
<keyword id="KW-0576">Peroxisome</keyword>
<keyword id="KW-1185">Reference proteome</keyword>
<keyword id="KW-0812">Transmembrane</keyword>
<keyword id="KW-1133">Transmembrane helix</keyword>
<evidence type="ECO:0000250" key="1">
    <source>
        <dbReference type="UniProtKB" id="Q9Y3D6"/>
    </source>
</evidence>
<evidence type="ECO:0000255" key="2"/>
<evidence type="ECO:0000255" key="3">
    <source>
        <dbReference type="PIRNR" id="PIRNR008835"/>
    </source>
</evidence>
<evidence type="ECO:0000269" key="4">
    <source>
    </source>
</evidence>
<evidence type="ECO:0000269" key="5">
    <source>
    </source>
</evidence>
<evidence type="ECO:0000269" key="6">
    <source>
    </source>
</evidence>
<evidence type="ECO:0000305" key="7"/>
<evidence type="ECO:0000312" key="8">
    <source>
        <dbReference type="Proteomes" id="UP000001940"/>
    </source>
</evidence>
<evidence type="ECO:0000312" key="9">
    <source>
        <dbReference type="WormBase" id="F41G3.4"/>
    </source>
</evidence>
<comment type="function">
    <text evidence="1 3 4 5 6">Involved in the fragmentation of the mitochondrial network (By similarity). Involved in perinuclear clustering of the mitochondrial network (By similarity). Plays a role in removal of ultraviolet C radiation-induced mitochondrial DNA damage (PubMed:24058863). May act, redundantly with fis-2, downstream of mitochondrial fission, before the fission products participate in either mitochondrial homeostasis, mitophagy, or apoptosis (PubMed:18722182, PubMed:24196833).</text>
</comment>
<comment type="subcellular location">
    <subcellularLocation>
        <location evidence="1">Mitochondrion outer membrane</location>
        <topology evidence="1">Single-pass membrane protein</topology>
    </subcellularLocation>
    <subcellularLocation>
        <location evidence="1">Peroxisome membrane</location>
        <topology evidence="1">Single-pass membrane protein</topology>
    </subcellularLocation>
</comment>
<comment type="domain">
    <text evidence="1">The C-terminus is required for mitochondrial or peroxisomal localization, while the N-terminus is necessary for mitochondrial or peroxisomal fission.</text>
</comment>
<comment type="disruption phenotype">
    <text evidence="4 5 6">Mitochondrial connectivity appears normal, also normal in a fis-2 mutant background (PubMed:18722182, PubMed:24196833). Modest but consistent increase in the number and size of clusters of protein lgg-1, perhaps representing abnormal autophagosomes, in a fis-2 mutant background (PubMed:24196833). RNAi-mediated knockdown inhibits removal of ultraviolet C radiation-induced mitochondrial DNA damage (PubMed:24058863).</text>
</comment>
<comment type="similarity">
    <text evidence="3 7">Belongs to the FIS1 family.</text>
</comment>
<organism evidence="8">
    <name type="scientific">Caenorhabditis elegans</name>
    <dbReference type="NCBI Taxonomy" id="6239"/>
    <lineage>
        <taxon>Eukaryota</taxon>
        <taxon>Metazoa</taxon>
        <taxon>Ecdysozoa</taxon>
        <taxon>Nematoda</taxon>
        <taxon>Chromadorea</taxon>
        <taxon>Rhabditida</taxon>
        <taxon>Rhabditina</taxon>
        <taxon>Rhabditomorpha</taxon>
        <taxon>Rhabditoidea</taxon>
        <taxon>Rhabditidae</taxon>
        <taxon>Peloderinae</taxon>
        <taxon>Caenorhabditis</taxon>
    </lineage>
</organism>
<name>FIS11_CAEEL</name>
<accession>Q20291</accession>
<feature type="chain" id="PRO_0000457486" description="FIS1-related protein fis-1">
    <location>
        <begin position="1"/>
        <end position="143"/>
    </location>
</feature>
<feature type="transmembrane region" description="Helical" evidence="2">
    <location>
        <begin position="121"/>
        <end position="141"/>
    </location>
</feature>
<sequence>MEPESILDFHTEQEEILAARARSVSRENQISLAIVLVGSEDRREIKEGIEILEDVVSDTAHSEDSRVCVHYLALAHARLKNYDKSINLLNALLRTEPSNMQATELRRAVEKKMKREGLLGLGLLGGAVAVVGGLVIAGLAFRK</sequence>
<reference evidence="8" key="1">
    <citation type="journal article" date="1998" name="Science">
        <title>Genome sequence of the nematode C. elegans: a platform for investigating biology.</title>
        <authorList>
            <consortium name="The C. elegans sequencing consortium"/>
        </authorList>
    </citation>
    <scope>NUCLEOTIDE SEQUENCE [LARGE SCALE GENOMIC DNA]</scope>
    <source>
        <strain evidence="8">Bristol N2</strain>
    </source>
</reference>
<reference evidence="7" key="2">
    <citation type="journal article" date="2008" name="Mol. Cell">
        <title>Caenorhabditis elegans drp-1 and fis-2 regulate distinct cell-death execution pathways downstream of ced-3 and independent of ced-9.</title>
        <authorList>
            <person name="Breckenridge D.G."/>
            <person name="Kang B.H."/>
            <person name="Kokel D."/>
            <person name="Mitani S."/>
            <person name="Staehelin L.A."/>
            <person name="Xue D."/>
        </authorList>
    </citation>
    <scope>FUNCTION</scope>
    <scope>DISRUPTION PHENOTYPE</scope>
</reference>
<reference evidence="7" key="3">
    <citation type="journal article" date="2013" name="Worm">
        <title>Effects of mutations in mitochondrial dynamics-related genes on the mitochondrial response to ultraviolet C radiation in developing Caenorhabditis elegans.</title>
        <authorList>
            <person name="Bess A.S."/>
            <person name="Leung M.C."/>
            <person name="Ryde I.T."/>
            <person name="Rooney J.P."/>
            <person name="Hinton D.E."/>
            <person name="Meyer J.N."/>
        </authorList>
    </citation>
    <scope>FUNCTION</scope>
    <scope>DISRUPTION PHENOTYPE</scope>
</reference>
<reference evidence="7" key="4">
    <citation type="journal article" date="2014" name="Mol. Biol. Cell">
        <title>Mutations in Fis1 disrupt orderly disposal of defective mitochondria.</title>
        <authorList>
            <person name="Shen Q."/>
            <person name="Yamano K."/>
            <person name="Head B.P."/>
            <person name="Kawajiri S."/>
            <person name="Cheung J.T."/>
            <person name="Wang C."/>
            <person name="Cho J.H."/>
            <person name="Hattori N."/>
            <person name="Youle R.J."/>
            <person name="van der Bliek A.M."/>
        </authorList>
    </citation>
    <scope>FUNCTION</scope>
    <scope>DISRUPTION PHENOTYPE</scope>
</reference>
<proteinExistence type="inferred from homology"/>
<gene>
    <name evidence="9" type="primary">fis-1</name>
    <name evidence="9" type="ORF">F41G3.4</name>
</gene>
<protein>
    <recommendedName>
        <fullName evidence="9">FIS1-related protein fis-1</fullName>
    </recommendedName>
    <alternativeName>
        <fullName evidence="3">Mitochondrial fission 1 protein fis-1</fullName>
    </alternativeName>
</protein>